<sequence length="292" mass="33407">MRRSPDLPYIILFLIPALILIGIFVYFAVVWNIYISFTDWRGLIPSYHFVGLAQYKQLIHDPIFWTSLRNNLLLILLFVPGSLLLGLFLAILLDMKVRFESGFRTIYVLPFALSFVVTATLWAWMYDPSSGVLNVLFDKLGLDFLKSGWITDPKIAMYCIIIALIWQFSGYTMIIYLAGIRSIPIEQYEGALIDGASTWQLYRYIVIPQLTKPTLSAFVVLMVFSLKAFDFIWVLTRGGPGTSTFILAIEMYKETFAKTNFAYGAAIATILLLMALVVVLPYLYWSYKGEER</sequence>
<keyword id="KW-1003">Cell membrane</keyword>
<keyword id="KW-0472">Membrane</keyword>
<keyword id="KW-0812">Transmembrane</keyword>
<keyword id="KW-1133">Transmembrane helix</keyword>
<keyword id="KW-0813">Transport</keyword>
<evidence type="ECO:0000255" key="1">
    <source>
        <dbReference type="PROSITE-ProRule" id="PRU00441"/>
    </source>
</evidence>
<evidence type="ECO:0000305" key="2"/>
<accession>O58968</accession>
<comment type="function">
    <text>Probably part of a binding-protein-dependent transport system PH1214/15/16. Probably responsible for the translocation of the substrate across the membrane.</text>
</comment>
<comment type="subcellular location">
    <subcellularLocation>
        <location evidence="2">Cell membrane</location>
        <topology evidence="1">Multi-pass membrane protein</topology>
    </subcellularLocation>
</comment>
<comment type="similarity">
    <text evidence="2">Belongs to the binding-protein-dependent transport system permease family. MalFG subfamily.</text>
</comment>
<feature type="chain" id="PRO_0000060311" description="Probable ABC transporter permease protein PH1215">
    <location>
        <begin position="1"/>
        <end position="292"/>
    </location>
</feature>
<feature type="transmembrane region" description="Helical" evidence="1">
    <location>
        <begin position="10"/>
        <end position="30"/>
    </location>
</feature>
<feature type="transmembrane region" description="Helical" evidence="1">
    <location>
        <begin position="72"/>
        <end position="92"/>
    </location>
</feature>
<feature type="transmembrane region" description="Helical" evidence="1">
    <location>
        <begin position="106"/>
        <end position="126"/>
    </location>
</feature>
<feature type="transmembrane region" description="Helical" evidence="1">
    <location>
        <begin position="160"/>
        <end position="180"/>
    </location>
</feature>
<feature type="transmembrane region" description="Helical" evidence="1">
    <location>
        <begin position="215"/>
        <end position="235"/>
    </location>
</feature>
<feature type="transmembrane region" description="Helical" evidence="1">
    <location>
        <begin position="261"/>
        <end position="281"/>
    </location>
</feature>
<feature type="domain" description="ABC transmembrane type-1" evidence="1">
    <location>
        <begin position="68"/>
        <end position="284"/>
    </location>
</feature>
<reference key="1">
    <citation type="journal article" date="1998" name="DNA Res.">
        <title>Complete sequence and gene organization of the genome of a hyper-thermophilic archaebacterium, Pyrococcus horikoshii OT3.</title>
        <authorList>
            <person name="Kawarabayasi Y."/>
            <person name="Sawada M."/>
            <person name="Horikawa H."/>
            <person name="Haikawa Y."/>
            <person name="Hino Y."/>
            <person name="Yamamoto S."/>
            <person name="Sekine M."/>
            <person name="Baba S."/>
            <person name="Kosugi H."/>
            <person name="Hosoyama A."/>
            <person name="Nagai Y."/>
            <person name="Sakai M."/>
            <person name="Ogura K."/>
            <person name="Otsuka R."/>
            <person name="Nakazawa H."/>
            <person name="Takamiya M."/>
            <person name="Ohfuku Y."/>
            <person name="Funahashi T."/>
            <person name="Tanaka T."/>
            <person name="Kudoh Y."/>
            <person name="Yamazaki J."/>
            <person name="Kushida N."/>
            <person name="Oguchi A."/>
            <person name="Aoki K."/>
            <person name="Yoshizawa T."/>
            <person name="Nakamura Y."/>
            <person name="Robb F.T."/>
            <person name="Horikoshi K."/>
            <person name="Masuchi Y."/>
            <person name="Shizuya H."/>
            <person name="Kikuchi H."/>
        </authorList>
    </citation>
    <scope>NUCLEOTIDE SEQUENCE [LARGE SCALE GENOMIC DNA]</scope>
    <source>
        <strain>ATCC 700860 / DSM 12428 / JCM 9974 / NBRC 100139 / OT-3</strain>
    </source>
</reference>
<dbReference type="EMBL" id="BA000001">
    <property type="protein sequence ID" value="BAA30315.1"/>
    <property type="molecule type" value="Genomic_DNA"/>
</dbReference>
<dbReference type="PIR" id="A71065">
    <property type="entry name" value="A71065"/>
</dbReference>
<dbReference type="RefSeq" id="WP_010885302.1">
    <property type="nucleotide sequence ID" value="NC_000961.1"/>
</dbReference>
<dbReference type="SMR" id="O58968"/>
<dbReference type="STRING" id="70601.gene:9378177"/>
<dbReference type="EnsemblBacteria" id="BAA30315">
    <property type="protein sequence ID" value="BAA30315"/>
    <property type="gene ID" value="BAA30315"/>
</dbReference>
<dbReference type="GeneID" id="1443537"/>
<dbReference type="KEGG" id="pho:PH1215"/>
<dbReference type="eggNOG" id="arCOG00157">
    <property type="taxonomic scope" value="Archaea"/>
</dbReference>
<dbReference type="OrthoDB" id="45815at2157"/>
<dbReference type="Proteomes" id="UP000000752">
    <property type="component" value="Chromosome"/>
</dbReference>
<dbReference type="GO" id="GO:0005886">
    <property type="term" value="C:plasma membrane"/>
    <property type="evidence" value="ECO:0007669"/>
    <property type="project" value="UniProtKB-SubCell"/>
</dbReference>
<dbReference type="GO" id="GO:0055085">
    <property type="term" value="P:transmembrane transport"/>
    <property type="evidence" value="ECO:0007669"/>
    <property type="project" value="InterPro"/>
</dbReference>
<dbReference type="CDD" id="cd06261">
    <property type="entry name" value="TM_PBP2"/>
    <property type="match status" value="1"/>
</dbReference>
<dbReference type="Gene3D" id="1.10.3720.10">
    <property type="entry name" value="MetI-like"/>
    <property type="match status" value="1"/>
</dbReference>
<dbReference type="InterPro" id="IPR051393">
    <property type="entry name" value="ABC_transporter_permease"/>
</dbReference>
<dbReference type="InterPro" id="IPR000515">
    <property type="entry name" value="MetI-like"/>
</dbReference>
<dbReference type="InterPro" id="IPR035906">
    <property type="entry name" value="MetI-like_sf"/>
</dbReference>
<dbReference type="PANTHER" id="PTHR30193">
    <property type="entry name" value="ABC TRANSPORTER PERMEASE PROTEIN"/>
    <property type="match status" value="1"/>
</dbReference>
<dbReference type="PANTHER" id="PTHR30193:SF42">
    <property type="entry name" value="ABC TRANSPORTER PERMEASE PROTEIN"/>
    <property type="match status" value="1"/>
</dbReference>
<dbReference type="Pfam" id="PF00528">
    <property type="entry name" value="BPD_transp_1"/>
    <property type="match status" value="1"/>
</dbReference>
<dbReference type="SUPFAM" id="SSF161098">
    <property type="entry name" value="MetI-like"/>
    <property type="match status" value="1"/>
</dbReference>
<dbReference type="PROSITE" id="PS50928">
    <property type="entry name" value="ABC_TM1"/>
    <property type="match status" value="1"/>
</dbReference>
<protein>
    <recommendedName>
        <fullName>Probable ABC transporter permease protein PH1215</fullName>
    </recommendedName>
</protein>
<proteinExistence type="inferred from homology"/>
<organism>
    <name type="scientific">Pyrococcus horikoshii (strain ATCC 700860 / DSM 12428 / JCM 9974 / NBRC 100139 / OT-3)</name>
    <dbReference type="NCBI Taxonomy" id="70601"/>
    <lineage>
        <taxon>Archaea</taxon>
        <taxon>Methanobacteriati</taxon>
        <taxon>Methanobacteriota</taxon>
        <taxon>Thermococci</taxon>
        <taxon>Thermococcales</taxon>
        <taxon>Thermococcaceae</taxon>
        <taxon>Pyrococcus</taxon>
    </lineage>
</organism>
<gene>
    <name type="ordered locus">PH1215</name>
    <name type="ORF">PHBK039</name>
</gene>
<name>Y1215_PYRHO</name>